<protein>
    <recommendedName>
        <fullName evidence="1">Phosphopentomutase</fullName>
        <ecNumber evidence="1">5.4.2.7</ecNumber>
    </recommendedName>
    <alternativeName>
        <fullName evidence="1">Phosphodeoxyribomutase</fullName>
    </alternativeName>
</protein>
<name>DEOB_YERPN</name>
<keyword id="KW-0963">Cytoplasm</keyword>
<keyword id="KW-0413">Isomerase</keyword>
<keyword id="KW-0464">Manganese</keyword>
<keyword id="KW-0479">Metal-binding</keyword>
<reference key="1">
    <citation type="journal article" date="2006" name="J. Bacteriol.">
        <title>Complete genome sequence of Yersinia pestis strains Antiqua and Nepal516: evidence of gene reduction in an emerging pathogen.</title>
        <authorList>
            <person name="Chain P.S.G."/>
            <person name="Hu P."/>
            <person name="Malfatti S.A."/>
            <person name="Radnedge L."/>
            <person name="Larimer F."/>
            <person name="Vergez L.M."/>
            <person name="Worsham P."/>
            <person name="Chu M.C."/>
            <person name="Andersen G.L."/>
        </authorList>
    </citation>
    <scope>NUCLEOTIDE SEQUENCE [LARGE SCALE GENOMIC DNA]</scope>
    <source>
        <strain>Nepal516</strain>
    </source>
</reference>
<reference key="2">
    <citation type="submission" date="2009-04" db="EMBL/GenBank/DDBJ databases">
        <title>Yersinia pestis Nepal516A whole genome shotgun sequencing project.</title>
        <authorList>
            <person name="Plunkett G. III"/>
            <person name="Anderson B.D."/>
            <person name="Baumler D.J."/>
            <person name="Burland V."/>
            <person name="Cabot E.L."/>
            <person name="Glasner J.D."/>
            <person name="Mau B."/>
            <person name="Neeno-Eckwall E."/>
            <person name="Perna N.T."/>
            <person name="Munk A.C."/>
            <person name="Tapia R."/>
            <person name="Green L.D."/>
            <person name="Rogers Y.C."/>
            <person name="Detter J.C."/>
            <person name="Bruce D.C."/>
            <person name="Brettin T.S."/>
        </authorList>
    </citation>
    <scope>NUCLEOTIDE SEQUENCE [LARGE SCALE GENOMIC DNA]</scope>
    <source>
        <strain>Nepal516</strain>
    </source>
</reference>
<sequence length="407" mass="44106">MKRTFIMVLDSFGIGASADAKKFGDEGADTLGHIAEACARGEANVGRSGPLTLPNLSRLGLGKAAEESTGTFPVGLDKNADIIGAYGYASELSSGKDTPSGHWEIAGVPVLFDWGYFSDVENSFPQELLDKLVKRANLPGYLGNCHSSGTVILDQLGEEHMKTGKPIFYTSADSVFQIACHEETFGLDRLYELCEIAREELTDGGYNIGRVIARPFIGDKPGHFQRTGNRHDLAVEPPAPTMLKKLVDEKGGEVVSIGKIADIYAQVGITQKVKATGLDALFDATIEEMKKAGDNTIVFTNFVDFDSSYGHRRDVAGYAAALELFDRRLPELMALIKEDDILILTADHGCDPTWPGTDHTREHIPVLVYGPKVKPGSLGHRETFADIGQTVAAYFGLSPMDYGKNML</sequence>
<feature type="chain" id="PRO_0000258322" description="Phosphopentomutase">
    <location>
        <begin position="1"/>
        <end position="407"/>
    </location>
</feature>
<feature type="binding site" evidence="1">
    <location>
        <position position="10"/>
    </location>
    <ligand>
        <name>Mn(2+)</name>
        <dbReference type="ChEBI" id="CHEBI:29035"/>
        <label>1</label>
    </ligand>
</feature>
<feature type="binding site" evidence="1">
    <location>
        <position position="306"/>
    </location>
    <ligand>
        <name>Mn(2+)</name>
        <dbReference type="ChEBI" id="CHEBI:29035"/>
        <label>2</label>
    </ligand>
</feature>
<feature type="binding site" evidence="1">
    <location>
        <position position="311"/>
    </location>
    <ligand>
        <name>Mn(2+)</name>
        <dbReference type="ChEBI" id="CHEBI:29035"/>
        <label>2</label>
    </ligand>
</feature>
<feature type="binding site" evidence="1">
    <location>
        <position position="347"/>
    </location>
    <ligand>
        <name>Mn(2+)</name>
        <dbReference type="ChEBI" id="CHEBI:29035"/>
        <label>1</label>
    </ligand>
</feature>
<feature type="binding site" evidence="1">
    <location>
        <position position="348"/>
    </location>
    <ligand>
        <name>Mn(2+)</name>
        <dbReference type="ChEBI" id="CHEBI:29035"/>
        <label>1</label>
    </ligand>
</feature>
<feature type="binding site" evidence="1">
    <location>
        <position position="359"/>
    </location>
    <ligand>
        <name>Mn(2+)</name>
        <dbReference type="ChEBI" id="CHEBI:29035"/>
        <label>2</label>
    </ligand>
</feature>
<dbReference type="EC" id="5.4.2.7" evidence="1"/>
<dbReference type="EMBL" id="CP000305">
    <property type="protein sequence ID" value="ABG16642.1"/>
    <property type="molecule type" value="Genomic_DNA"/>
</dbReference>
<dbReference type="EMBL" id="ACNQ01000006">
    <property type="protein sequence ID" value="EEO78094.1"/>
    <property type="molecule type" value="Genomic_DNA"/>
</dbReference>
<dbReference type="RefSeq" id="WP_002209216.1">
    <property type="nucleotide sequence ID" value="NZ_ACNQ01000006.1"/>
</dbReference>
<dbReference type="SMR" id="Q1CMY8"/>
<dbReference type="GeneID" id="57974169"/>
<dbReference type="KEGG" id="ypn:YPN_0310"/>
<dbReference type="HOGENOM" id="CLU_053861_0_0_6"/>
<dbReference type="UniPathway" id="UPA00002">
    <property type="reaction ID" value="UER00467"/>
</dbReference>
<dbReference type="Proteomes" id="UP000008936">
    <property type="component" value="Chromosome"/>
</dbReference>
<dbReference type="GO" id="GO:0005829">
    <property type="term" value="C:cytosol"/>
    <property type="evidence" value="ECO:0007669"/>
    <property type="project" value="TreeGrafter"/>
</dbReference>
<dbReference type="GO" id="GO:0000287">
    <property type="term" value="F:magnesium ion binding"/>
    <property type="evidence" value="ECO:0007669"/>
    <property type="project" value="InterPro"/>
</dbReference>
<dbReference type="GO" id="GO:0030145">
    <property type="term" value="F:manganese ion binding"/>
    <property type="evidence" value="ECO:0007669"/>
    <property type="project" value="UniProtKB-UniRule"/>
</dbReference>
<dbReference type="GO" id="GO:0008973">
    <property type="term" value="F:phosphopentomutase activity"/>
    <property type="evidence" value="ECO:0007669"/>
    <property type="project" value="UniProtKB-UniRule"/>
</dbReference>
<dbReference type="GO" id="GO:0006018">
    <property type="term" value="P:2-deoxyribose 1-phosphate catabolic process"/>
    <property type="evidence" value="ECO:0007669"/>
    <property type="project" value="UniProtKB-UniRule"/>
</dbReference>
<dbReference type="GO" id="GO:0006015">
    <property type="term" value="P:5-phosphoribose 1-diphosphate biosynthetic process"/>
    <property type="evidence" value="ECO:0007669"/>
    <property type="project" value="UniProtKB-UniPathway"/>
</dbReference>
<dbReference type="GO" id="GO:0043094">
    <property type="term" value="P:metabolic compound salvage"/>
    <property type="evidence" value="ECO:0007669"/>
    <property type="project" value="InterPro"/>
</dbReference>
<dbReference type="GO" id="GO:0009117">
    <property type="term" value="P:nucleotide metabolic process"/>
    <property type="evidence" value="ECO:0007669"/>
    <property type="project" value="InterPro"/>
</dbReference>
<dbReference type="CDD" id="cd16009">
    <property type="entry name" value="PPM"/>
    <property type="match status" value="1"/>
</dbReference>
<dbReference type="FunFam" id="3.30.70.1250:FF:000001">
    <property type="entry name" value="Phosphopentomutase"/>
    <property type="match status" value="1"/>
</dbReference>
<dbReference type="Gene3D" id="3.40.720.10">
    <property type="entry name" value="Alkaline Phosphatase, subunit A"/>
    <property type="match status" value="1"/>
</dbReference>
<dbReference type="Gene3D" id="3.30.70.1250">
    <property type="entry name" value="Phosphopentomutase"/>
    <property type="match status" value="1"/>
</dbReference>
<dbReference type="HAMAP" id="MF_00740">
    <property type="entry name" value="Phosphopentomut"/>
    <property type="match status" value="1"/>
</dbReference>
<dbReference type="InterPro" id="IPR017850">
    <property type="entry name" value="Alkaline_phosphatase_core_sf"/>
</dbReference>
<dbReference type="InterPro" id="IPR010045">
    <property type="entry name" value="DeoB"/>
</dbReference>
<dbReference type="InterPro" id="IPR006124">
    <property type="entry name" value="Metalloenzyme"/>
</dbReference>
<dbReference type="InterPro" id="IPR024052">
    <property type="entry name" value="Phosphopentomutase_DeoB_cap_sf"/>
</dbReference>
<dbReference type="NCBIfam" id="TIGR01696">
    <property type="entry name" value="deoB"/>
    <property type="match status" value="1"/>
</dbReference>
<dbReference type="NCBIfam" id="NF003766">
    <property type="entry name" value="PRK05362.1"/>
    <property type="match status" value="1"/>
</dbReference>
<dbReference type="PANTHER" id="PTHR21110">
    <property type="entry name" value="PHOSPHOPENTOMUTASE"/>
    <property type="match status" value="1"/>
</dbReference>
<dbReference type="PANTHER" id="PTHR21110:SF0">
    <property type="entry name" value="PHOSPHOPENTOMUTASE"/>
    <property type="match status" value="1"/>
</dbReference>
<dbReference type="Pfam" id="PF01676">
    <property type="entry name" value="Metalloenzyme"/>
    <property type="match status" value="1"/>
</dbReference>
<dbReference type="PIRSF" id="PIRSF001491">
    <property type="entry name" value="Ppentomutase"/>
    <property type="match status" value="1"/>
</dbReference>
<dbReference type="SUPFAM" id="SSF53649">
    <property type="entry name" value="Alkaline phosphatase-like"/>
    <property type="match status" value="1"/>
</dbReference>
<dbReference type="SUPFAM" id="SSF143856">
    <property type="entry name" value="DeoB insert domain-like"/>
    <property type="match status" value="1"/>
</dbReference>
<organism>
    <name type="scientific">Yersinia pestis bv. Antiqua (strain Nepal516)</name>
    <dbReference type="NCBI Taxonomy" id="377628"/>
    <lineage>
        <taxon>Bacteria</taxon>
        <taxon>Pseudomonadati</taxon>
        <taxon>Pseudomonadota</taxon>
        <taxon>Gammaproteobacteria</taxon>
        <taxon>Enterobacterales</taxon>
        <taxon>Yersiniaceae</taxon>
        <taxon>Yersinia</taxon>
    </lineage>
</organism>
<proteinExistence type="inferred from homology"/>
<evidence type="ECO:0000255" key="1">
    <source>
        <dbReference type="HAMAP-Rule" id="MF_00740"/>
    </source>
</evidence>
<accession>Q1CMY8</accession>
<accession>C4GNL2</accession>
<comment type="function">
    <text evidence="1">Isomerase that catalyzes the conversion of deoxy-ribose 1-phosphate (dRib-1-P) and ribose 1-phosphate (Rib-1-P) to deoxy-ribose 5-phosphate (dRib-5-P) and ribose 5-phosphate (Rib-5-P), respectively.</text>
</comment>
<comment type="catalytic activity">
    <reaction evidence="1">
        <text>2-deoxy-alpha-D-ribose 1-phosphate = 2-deoxy-D-ribose 5-phosphate</text>
        <dbReference type="Rhea" id="RHEA:27658"/>
        <dbReference type="ChEBI" id="CHEBI:57259"/>
        <dbReference type="ChEBI" id="CHEBI:62877"/>
        <dbReference type="EC" id="5.4.2.7"/>
    </reaction>
</comment>
<comment type="catalytic activity">
    <reaction evidence="1">
        <text>alpha-D-ribose 1-phosphate = D-ribose 5-phosphate</text>
        <dbReference type="Rhea" id="RHEA:18793"/>
        <dbReference type="ChEBI" id="CHEBI:57720"/>
        <dbReference type="ChEBI" id="CHEBI:78346"/>
        <dbReference type="EC" id="5.4.2.7"/>
    </reaction>
</comment>
<comment type="cofactor">
    <cofactor evidence="1">
        <name>Mn(2+)</name>
        <dbReference type="ChEBI" id="CHEBI:29035"/>
    </cofactor>
    <text evidence="1">Binds 2 manganese ions.</text>
</comment>
<comment type="pathway">
    <text evidence="1">Carbohydrate degradation; 2-deoxy-D-ribose 1-phosphate degradation; D-glyceraldehyde 3-phosphate and acetaldehyde from 2-deoxy-alpha-D-ribose 1-phosphate: step 1/2.</text>
</comment>
<comment type="subcellular location">
    <subcellularLocation>
        <location evidence="1">Cytoplasm</location>
    </subcellularLocation>
</comment>
<comment type="similarity">
    <text evidence="1">Belongs to the phosphopentomutase family.</text>
</comment>
<gene>
    <name evidence="1" type="primary">deoB</name>
    <name type="ordered locus">YPN_0310</name>
    <name type="ORF">YP516_0316</name>
</gene>